<accession>P0A2D7</accession>
<accession>O54427</accession>
<proteinExistence type="inferred from homology"/>
<keyword id="KW-0010">Activator</keyword>
<keyword id="KW-0058">Aromatic hydrocarbons catabolism</keyword>
<keyword id="KW-0067">ATP-binding</keyword>
<keyword id="KW-0963">Cytoplasm</keyword>
<keyword id="KW-0238">DNA-binding</keyword>
<keyword id="KW-0547">Nucleotide-binding</keyword>
<keyword id="KW-1185">Reference proteome</keyword>
<keyword id="KW-0678">Repressor</keyword>
<keyword id="KW-0804">Transcription</keyword>
<keyword id="KW-0805">Transcription regulation</keyword>
<comment type="function">
    <text evidence="1">Dual transcriptional regulator of the TyrR regulon, which includes a number of genes coding for proteins involved in the biosynthesis or transport of the three aromatic amino acids, phenylalanine, tyrosine and tryptophan. These three aromatic amino acids act as effectors which bind to the TyrR protein to form an active regulatory protein. Acts by binding specifically to TyrR boxes in the promoter region of the target genes.</text>
</comment>
<comment type="subunit">
    <text evidence="1">Homodimer. In presence of tyrosine (or high concentrations of phenylalanine or tryptophan) and ATP, it self-associates to form an hexamer.</text>
</comment>
<comment type="subcellular location">
    <subcellularLocation>
        <location evidence="1">Cytoplasm</location>
    </subcellularLocation>
</comment>
<dbReference type="EMBL" id="U90141">
    <property type="protein sequence ID" value="AAB93869.1"/>
    <property type="molecule type" value="Genomic_DNA"/>
</dbReference>
<dbReference type="EMBL" id="AE006468">
    <property type="protein sequence ID" value="AAL20600.1"/>
    <property type="molecule type" value="Genomic_DNA"/>
</dbReference>
<dbReference type="RefSeq" id="NP_460641.1">
    <property type="nucleotide sequence ID" value="NC_003197.2"/>
</dbReference>
<dbReference type="RefSeq" id="WP_001235493.1">
    <property type="nucleotide sequence ID" value="NC_003197.2"/>
</dbReference>
<dbReference type="SMR" id="P0A2D7"/>
<dbReference type="STRING" id="99287.STM1683"/>
<dbReference type="PaxDb" id="99287-STM1683"/>
<dbReference type="GeneID" id="1253201"/>
<dbReference type="KEGG" id="stm:STM1683"/>
<dbReference type="PATRIC" id="fig|99287.12.peg.1777"/>
<dbReference type="HOGENOM" id="CLU_000445_8_2_6"/>
<dbReference type="OMA" id="CQNRIGI"/>
<dbReference type="PhylomeDB" id="P0A2D7"/>
<dbReference type="BioCyc" id="SENT99287:STM1683-MONOMER"/>
<dbReference type="Proteomes" id="UP000001014">
    <property type="component" value="Chromosome"/>
</dbReference>
<dbReference type="GO" id="GO:0005737">
    <property type="term" value="C:cytoplasm"/>
    <property type="evidence" value="ECO:0007669"/>
    <property type="project" value="UniProtKB-SubCell"/>
</dbReference>
<dbReference type="GO" id="GO:0032993">
    <property type="term" value="C:protein-DNA complex"/>
    <property type="evidence" value="ECO:0000318"/>
    <property type="project" value="GO_Central"/>
</dbReference>
<dbReference type="GO" id="GO:0005524">
    <property type="term" value="F:ATP binding"/>
    <property type="evidence" value="ECO:0007669"/>
    <property type="project" value="UniProtKB-KW"/>
</dbReference>
<dbReference type="GO" id="GO:0016887">
    <property type="term" value="F:ATP hydrolysis activity"/>
    <property type="evidence" value="ECO:0007669"/>
    <property type="project" value="InterPro"/>
</dbReference>
<dbReference type="GO" id="GO:0000987">
    <property type="term" value="F:cis-regulatory region sequence-specific DNA binding"/>
    <property type="evidence" value="ECO:0000318"/>
    <property type="project" value="GO_Central"/>
</dbReference>
<dbReference type="GO" id="GO:0001216">
    <property type="term" value="F:DNA-binding transcription activator activity"/>
    <property type="evidence" value="ECO:0000318"/>
    <property type="project" value="GO_Central"/>
</dbReference>
<dbReference type="GO" id="GO:0009056">
    <property type="term" value="P:catabolic process"/>
    <property type="evidence" value="ECO:0007669"/>
    <property type="project" value="UniProtKB-KW"/>
</dbReference>
<dbReference type="GO" id="GO:0045893">
    <property type="term" value="P:positive regulation of DNA-templated transcription"/>
    <property type="evidence" value="ECO:0000318"/>
    <property type="project" value="GO_Central"/>
</dbReference>
<dbReference type="CDD" id="cd00009">
    <property type="entry name" value="AAA"/>
    <property type="match status" value="1"/>
</dbReference>
<dbReference type="CDD" id="cd04877">
    <property type="entry name" value="ACT_TyrR"/>
    <property type="match status" value="1"/>
</dbReference>
<dbReference type="CDD" id="cd00130">
    <property type="entry name" value="PAS"/>
    <property type="match status" value="1"/>
</dbReference>
<dbReference type="FunFam" id="3.40.50.300:FF:000006">
    <property type="entry name" value="DNA-binding transcriptional regulator NtrC"/>
    <property type="match status" value="1"/>
</dbReference>
<dbReference type="FunFam" id="1.10.10.60:FF:000112">
    <property type="entry name" value="TyrR family transcriptional regulator"/>
    <property type="match status" value="1"/>
</dbReference>
<dbReference type="FunFam" id="3.30.70.260:FF:000013">
    <property type="entry name" value="TyrR family transcriptional regulator"/>
    <property type="match status" value="1"/>
</dbReference>
<dbReference type="Gene3D" id="1.10.8.60">
    <property type="match status" value="1"/>
</dbReference>
<dbReference type="Gene3D" id="3.30.70.260">
    <property type="match status" value="1"/>
</dbReference>
<dbReference type="Gene3D" id="1.10.10.60">
    <property type="entry name" value="Homeodomain-like"/>
    <property type="match status" value="1"/>
</dbReference>
<dbReference type="Gene3D" id="3.40.50.300">
    <property type="entry name" value="P-loop containing nucleotide triphosphate hydrolases"/>
    <property type="match status" value="1"/>
</dbReference>
<dbReference type="Gene3D" id="3.30.450.20">
    <property type="entry name" value="PAS domain"/>
    <property type="match status" value="1"/>
</dbReference>
<dbReference type="InterPro" id="IPR003593">
    <property type="entry name" value="AAA+_ATPase"/>
</dbReference>
<dbReference type="InterPro" id="IPR045865">
    <property type="entry name" value="ACT-like_dom_sf"/>
</dbReference>
<dbReference type="InterPro" id="IPR002912">
    <property type="entry name" value="ACT_dom"/>
</dbReference>
<dbReference type="InterPro" id="IPR009057">
    <property type="entry name" value="Homeodomain-like_sf"/>
</dbReference>
<dbReference type="InterPro" id="IPR030828">
    <property type="entry name" value="HTH_TyrR"/>
</dbReference>
<dbReference type="InterPro" id="IPR027417">
    <property type="entry name" value="P-loop_NTPase"/>
</dbReference>
<dbReference type="InterPro" id="IPR000014">
    <property type="entry name" value="PAS"/>
</dbReference>
<dbReference type="InterPro" id="IPR035965">
    <property type="entry name" value="PAS-like_dom_sf"/>
</dbReference>
<dbReference type="InterPro" id="IPR002078">
    <property type="entry name" value="Sigma_54_int"/>
</dbReference>
<dbReference type="InterPro" id="IPR025662">
    <property type="entry name" value="Sigma_54_int_dom_ATP-bd_1"/>
</dbReference>
<dbReference type="InterPro" id="IPR025943">
    <property type="entry name" value="Sigma_54_int_dom_ATP-bd_2"/>
</dbReference>
<dbReference type="InterPro" id="IPR025944">
    <property type="entry name" value="Sigma_54_int_dom_CS"/>
</dbReference>
<dbReference type="NCBIfam" id="TIGR04381">
    <property type="entry name" value="HTH_TypR"/>
    <property type="match status" value="1"/>
</dbReference>
<dbReference type="NCBIfam" id="NF008085">
    <property type="entry name" value="PRK10820.1"/>
    <property type="match status" value="1"/>
</dbReference>
<dbReference type="PANTHER" id="PTHR32071:SF3">
    <property type="entry name" value="HTH-TYPE TRANSCRIPTIONAL REGULATORY PROTEIN TYRR"/>
    <property type="match status" value="1"/>
</dbReference>
<dbReference type="PANTHER" id="PTHR32071">
    <property type="entry name" value="TRANSCRIPTIONAL REGULATORY PROTEIN"/>
    <property type="match status" value="1"/>
</dbReference>
<dbReference type="Pfam" id="PF18024">
    <property type="entry name" value="HTH_50"/>
    <property type="match status" value="1"/>
</dbReference>
<dbReference type="Pfam" id="PF00158">
    <property type="entry name" value="Sigma54_activat"/>
    <property type="match status" value="1"/>
</dbReference>
<dbReference type="SMART" id="SM00382">
    <property type="entry name" value="AAA"/>
    <property type="match status" value="1"/>
</dbReference>
<dbReference type="SMART" id="SM00091">
    <property type="entry name" value="PAS"/>
    <property type="match status" value="1"/>
</dbReference>
<dbReference type="SUPFAM" id="SSF55021">
    <property type="entry name" value="ACT-like"/>
    <property type="match status" value="1"/>
</dbReference>
<dbReference type="SUPFAM" id="SSF46689">
    <property type="entry name" value="Homeodomain-like"/>
    <property type="match status" value="1"/>
</dbReference>
<dbReference type="SUPFAM" id="SSF52540">
    <property type="entry name" value="P-loop containing nucleoside triphosphate hydrolases"/>
    <property type="match status" value="1"/>
</dbReference>
<dbReference type="SUPFAM" id="SSF55785">
    <property type="entry name" value="PYP-like sensor domain (PAS domain)"/>
    <property type="match status" value="1"/>
</dbReference>
<dbReference type="PROSITE" id="PS51671">
    <property type="entry name" value="ACT"/>
    <property type="match status" value="1"/>
</dbReference>
<dbReference type="PROSITE" id="PS00675">
    <property type="entry name" value="SIGMA54_INTERACT_1"/>
    <property type="match status" value="1"/>
</dbReference>
<dbReference type="PROSITE" id="PS00676">
    <property type="entry name" value="SIGMA54_INTERACT_2"/>
    <property type="match status" value="1"/>
</dbReference>
<dbReference type="PROSITE" id="PS00688">
    <property type="entry name" value="SIGMA54_INTERACT_3"/>
    <property type="match status" value="1"/>
</dbReference>
<dbReference type="PROSITE" id="PS50045">
    <property type="entry name" value="SIGMA54_INTERACT_4"/>
    <property type="match status" value="1"/>
</dbReference>
<evidence type="ECO:0000250" key="1">
    <source>
        <dbReference type="UniProtKB" id="P07604"/>
    </source>
</evidence>
<evidence type="ECO:0000255" key="2">
    <source>
        <dbReference type="PROSITE-ProRule" id="PRU00140"/>
    </source>
</evidence>
<evidence type="ECO:0000255" key="3">
    <source>
        <dbReference type="PROSITE-ProRule" id="PRU00193"/>
    </source>
</evidence>
<evidence type="ECO:0000255" key="4">
    <source>
        <dbReference type="PROSITE-ProRule" id="PRU01007"/>
    </source>
</evidence>
<evidence type="ECO:0000303" key="5">
    <source ref="1"/>
</evidence>
<evidence type="ECO:0000305" key="6"/>
<organism>
    <name type="scientific">Salmonella typhimurium (strain LT2 / SGSC1412 / ATCC 700720)</name>
    <dbReference type="NCBI Taxonomy" id="99287"/>
    <lineage>
        <taxon>Bacteria</taxon>
        <taxon>Pseudomonadati</taxon>
        <taxon>Pseudomonadota</taxon>
        <taxon>Gammaproteobacteria</taxon>
        <taxon>Enterobacterales</taxon>
        <taxon>Enterobacteriaceae</taxon>
        <taxon>Salmonella</taxon>
    </lineage>
</organism>
<sequence>MRLEVFCEDRLGLTRELLDLLVLRSIDLRGIEIDPIGRIYLNFAELEFTDFSSLMAEIRRISGVTDVRTVPWMPSEREHLALSALLEALPEPVLSLDMKSKVEMANPASCQLFAQSQERMRHHTAAQLINGFNFQRWLDGNPQSSHNEHVVINGQNFLMEITPVHLQNENDEYVLTGAVVMLRSTIRMGQQLQNLSTQDLSAFSQIIAVSAKMKHVVEQARKLAMLSAPLLITGDTGTGKDLFAYACHQASPRSAKPYLALNCASIPEDAVESELFGHAPEGKKGFFEQANGGSVLLDEIGEMSPRMQAKLLRFLNDGTFRRVGEDHEIHVDVRVICATQKNLVELVQKGLFREDLYYRLNVLTLNLPPLRDCPQDIMPLTELFVARFADEQGVPRPKLSADLSTVLTRYGWPGNVRQLKNAIYRALTQLEGYELRPQDILLPDYDAATVAVGEDAMEGSLDDITSRFERSVLTQLYRSYPSTRKLAKRLGVSHTAIANKLREYGLSQKKGEE</sequence>
<name>TYRR_SALTY</name>
<gene>
    <name evidence="5" type="primary">tyrR</name>
    <name type="ordered locus">STM1683</name>
</gene>
<protein>
    <recommendedName>
        <fullName evidence="1">HTH-type transcriptional regulatory protein TyrR</fullName>
    </recommendedName>
</protein>
<feature type="chain" id="PRO_0000081342" description="HTH-type transcriptional regulatory protein TyrR">
    <location>
        <begin position="1"/>
        <end position="513"/>
    </location>
</feature>
<feature type="domain" description="ACT" evidence="4">
    <location>
        <begin position="2"/>
        <end position="72"/>
    </location>
</feature>
<feature type="domain" description="PAS" evidence="2">
    <location>
        <begin position="78"/>
        <end position="120"/>
    </location>
</feature>
<feature type="domain" description="Sigma-54 factor interaction" evidence="3">
    <location>
        <begin position="206"/>
        <end position="428"/>
    </location>
</feature>
<feature type="DNA-binding region" description="H-T-H motif" evidence="1">
    <location>
        <begin position="482"/>
        <end position="502"/>
    </location>
</feature>
<feature type="binding site" evidence="3">
    <location>
        <begin position="234"/>
        <end position="241"/>
    </location>
    <ligand>
        <name>ATP</name>
        <dbReference type="ChEBI" id="CHEBI:30616"/>
    </ligand>
</feature>
<feature type="binding site" evidence="3">
    <location>
        <begin position="290"/>
        <end position="299"/>
    </location>
    <ligand>
        <name>ATP</name>
        <dbReference type="ChEBI" id="CHEBI:30616"/>
    </ligand>
</feature>
<feature type="sequence conflict" description="In Ref. 1; AAB93869." evidence="6" ref="1">
    <original>Q</original>
    <variation>H</variation>
    <location>
        <position position="111"/>
    </location>
</feature>
<feature type="sequence conflict" description="In Ref. 1; AAB93869." evidence="6" ref="1">
    <original>H</original>
    <variation>N</variation>
    <location>
        <position position="122"/>
    </location>
</feature>
<feature type="sequence conflict" description="In Ref. 1; AAB93869." evidence="6" ref="1">
    <original>N</original>
    <variation>S</variation>
    <location>
        <position position="168"/>
    </location>
</feature>
<feature type="sequence conflict" description="In Ref. 1; AAB93869." evidence="6" ref="1">
    <original>S</original>
    <variation>G</variation>
    <location>
        <position position="227"/>
    </location>
</feature>
<feature type="sequence conflict" description="In Ref. 1; AAB93869." evidence="6" ref="1">
    <original>M</original>
    <variation>I</variation>
    <location>
        <position position="378"/>
    </location>
</feature>
<feature type="sequence conflict" description="In Ref. 1; AAB93869." evidence="6" ref="1">
    <original>L</original>
    <variation>V</variation>
    <location>
        <position position="427"/>
    </location>
</feature>
<feature type="sequence conflict" description="In Ref. 1; AAB93869." evidence="6" ref="1">
    <original>Y</original>
    <variation>N</variation>
    <location>
        <position position="480"/>
    </location>
</feature>
<reference key="1">
    <citation type="submission" date="1997-02" db="EMBL/GenBank/DDBJ databases">
        <title>Cloning and characterization of the tyrR genes of Citrobacter braakii and Salmonella typhimurium.</title>
        <authorList>
            <person name="Bai Q."/>
            <person name="Somerville R.L."/>
        </authorList>
    </citation>
    <scope>NUCLEOTIDE SEQUENCE [GENOMIC DNA]</scope>
</reference>
<reference key="2">
    <citation type="journal article" date="2001" name="Nature">
        <title>Complete genome sequence of Salmonella enterica serovar Typhimurium LT2.</title>
        <authorList>
            <person name="McClelland M."/>
            <person name="Sanderson K.E."/>
            <person name="Spieth J."/>
            <person name="Clifton S.W."/>
            <person name="Latreille P."/>
            <person name="Courtney L."/>
            <person name="Porwollik S."/>
            <person name="Ali J."/>
            <person name="Dante M."/>
            <person name="Du F."/>
            <person name="Hou S."/>
            <person name="Layman D."/>
            <person name="Leonard S."/>
            <person name="Nguyen C."/>
            <person name="Scott K."/>
            <person name="Holmes A."/>
            <person name="Grewal N."/>
            <person name="Mulvaney E."/>
            <person name="Ryan E."/>
            <person name="Sun H."/>
            <person name="Florea L."/>
            <person name="Miller W."/>
            <person name="Stoneking T."/>
            <person name="Nhan M."/>
            <person name="Waterston R."/>
            <person name="Wilson R.K."/>
        </authorList>
    </citation>
    <scope>NUCLEOTIDE SEQUENCE [LARGE SCALE GENOMIC DNA]</scope>
    <source>
        <strain>LT2 / SGSC1412 / ATCC 700720</strain>
    </source>
</reference>